<proteinExistence type="inferred from homology"/>
<comment type="function">
    <text evidence="1">Catalyzes the attachment of glutamate to tRNA(Glu) in a two-step reaction: glutamate is first activated by ATP to form Glu-AMP and then transferred to the acceptor end of tRNA(Glu).</text>
</comment>
<comment type="catalytic activity">
    <reaction evidence="1">
        <text>tRNA(Glu) + L-glutamate + ATP = L-glutamyl-tRNA(Glu) + AMP + diphosphate</text>
        <dbReference type="Rhea" id="RHEA:23540"/>
        <dbReference type="Rhea" id="RHEA-COMP:9663"/>
        <dbReference type="Rhea" id="RHEA-COMP:9680"/>
        <dbReference type="ChEBI" id="CHEBI:29985"/>
        <dbReference type="ChEBI" id="CHEBI:30616"/>
        <dbReference type="ChEBI" id="CHEBI:33019"/>
        <dbReference type="ChEBI" id="CHEBI:78442"/>
        <dbReference type="ChEBI" id="CHEBI:78520"/>
        <dbReference type="ChEBI" id="CHEBI:456215"/>
        <dbReference type="EC" id="6.1.1.17"/>
    </reaction>
</comment>
<comment type="subunit">
    <text evidence="1">Monomer.</text>
</comment>
<comment type="subcellular location">
    <subcellularLocation>
        <location evidence="1">Cytoplasm</location>
    </subcellularLocation>
</comment>
<comment type="similarity">
    <text evidence="1">Belongs to the class-I aminoacyl-tRNA synthetase family. Glutamate--tRNA ligase type 1 subfamily.</text>
</comment>
<gene>
    <name evidence="1" type="primary">gltX1</name>
    <name type="ordered locus">Suden_0145</name>
</gene>
<protein>
    <recommendedName>
        <fullName evidence="1">Glutamate--tRNA ligase 1</fullName>
        <ecNumber evidence="1">6.1.1.17</ecNumber>
    </recommendedName>
    <alternativeName>
        <fullName evidence="1">Glutamyl-tRNA synthetase 1</fullName>
        <shortName evidence="1">GluRS 1</shortName>
    </alternativeName>
</protein>
<dbReference type="EC" id="6.1.1.17" evidence="1"/>
<dbReference type="EMBL" id="CP000153">
    <property type="protein sequence ID" value="ABB43426.1"/>
    <property type="molecule type" value="Genomic_DNA"/>
</dbReference>
<dbReference type="RefSeq" id="WP_011371781.1">
    <property type="nucleotide sequence ID" value="NC_007575.1"/>
</dbReference>
<dbReference type="SMR" id="Q30UA5"/>
<dbReference type="STRING" id="326298.Suden_0145"/>
<dbReference type="KEGG" id="tdn:Suden_0145"/>
<dbReference type="eggNOG" id="COG0008">
    <property type="taxonomic scope" value="Bacteria"/>
</dbReference>
<dbReference type="HOGENOM" id="CLU_015768_6_3_7"/>
<dbReference type="OrthoDB" id="9807503at2"/>
<dbReference type="Proteomes" id="UP000002714">
    <property type="component" value="Chromosome"/>
</dbReference>
<dbReference type="GO" id="GO:0005829">
    <property type="term" value="C:cytosol"/>
    <property type="evidence" value="ECO:0007669"/>
    <property type="project" value="TreeGrafter"/>
</dbReference>
<dbReference type="GO" id="GO:0005524">
    <property type="term" value="F:ATP binding"/>
    <property type="evidence" value="ECO:0007669"/>
    <property type="project" value="UniProtKB-UniRule"/>
</dbReference>
<dbReference type="GO" id="GO:0004818">
    <property type="term" value="F:glutamate-tRNA ligase activity"/>
    <property type="evidence" value="ECO:0007669"/>
    <property type="project" value="UniProtKB-UniRule"/>
</dbReference>
<dbReference type="GO" id="GO:0000049">
    <property type="term" value="F:tRNA binding"/>
    <property type="evidence" value="ECO:0007669"/>
    <property type="project" value="InterPro"/>
</dbReference>
<dbReference type="GO" id="GO:0008270">
    <property type="term" value="F:zinc ion binding"/>
    <property type="evidence" value="ECO:0007669"/>
    <property type="project" value="InterPro"/>
</dbReference>
<dbReference type="GO" id="GO:0006424">
    <property type="term" value="P:glutamyl-tRNA aminoacylation"/>
    <property type="evidence" value="ECO:0007669"/>
    <property type="project" value="UniProtKB-UniRule"/>
</dbReference>
<dbReference type="CDD" id="cd00808">
    <property type="entry name" value="GluRS_core"/>
    <property type="match status" value="1"/>
</dbReference>
<dbReference type="FunFam" id="3.40.50.620:FF:000007">
    <property type="entry name" value="Glutamate--tRNA ligase"/>
    <property type="match status" value="1"/>
</dbReference>
<dbReference type="Gene3D" id="1.10.10.350">
    <property type="match status" value="1"/>
</dbReference>
<dbReference type="Gene3D" id="3.40.50.620">
    <property type="entry name" value="HUPs"/>
    <property type="match status" value="1"/>
</dbReference>
<dbReference type="HAMAP" id="MF_00022">
    <property type="entry name" value="Glu_tRNA_synth_type1"/>
    <property type="match status" value="1"/>
</dbReference>
<dbReference type="InterPro" id="IPR045462">
    <property type="entry name" value="aa-tRNA-synth_I_cd-bd"/>
</dbReference>
<dbReference type="InterPro" id="IPR020751">
    <property type="entry name" value="aa-tRNA-synth_I_codon-bd_sub2"/>
</dbReference>
<dbReference type="InterPro" id="IPR001412">
    <property type="entry name" value="aa-tRNA-synth_I_CS"/>
</dbReference>
<dbReference type="InterPro" id="IPR008925">
    <property type="entry name" value="aa_tRNA-synth_I_cd-bd_sf"/>
</dbReference>
<dbReference type="InterPro" id="IPR004527">
    <property type="entry name" value="Glu-tRNA-ligase_bac/mito"/>
</dbReference>
<dbReference type="InterPro" id="IPR000924">
    <property type="entry name" value="Glu/Gln-tRNA-synth"/>
</dbReference>
<dbReference type="InterPro" id="IPR020058">
    <property type="entry name" value="Glu/Gln-tRNA-synth_Ib_cat-dom"/>
</dbReference>
<dbReference type="InterPro" id="IPR049940">
    <property type="entry name" value="GluQ/Sye"/>
</dbReference>
<dbReference type="InterPro" id="IPR033910">
    <property type="entry name" value="GluRS_core"/>
</dbReference>
<dbReference type="InterPro" id="IPR014729">
    <property type="entry name" value="Rossmann-like_a/b/a_fold"/>
</dbReference>
<dbReference type="NCBIfam" id="TIGR00464">
    <property type="entry name" value="gltX_bact"/>
    <property type="match status" value="1"/>
</dbReference>
<dbReference type="PANTHER" id="PTHR43311">
    <property type="entry name" value="GLUTAMATE--TRNA LIGASE"/>
    <property type="match status" value="1"/>
</dbReference>
<dbReference type="PANTHER" id="PTHR43311:SF2">
    <property type="entry name" value="GLUTAMATE--TRNA LIGASE, MITOCHONDRIAL-RELATED"/>
    <property type="match status" value="1"/>
</dbReference>
<dbReference type="Pfam" id="PF19269">
    <property type="entry name" value="Anticodon_2"/>
    <property type="match status" value="1"/>
</dbReference>
<dbReference type="Pfam" id="PF00749">
    <property type="entry name" value="tRNA-synt_1c"/>
    <property type="match status" value="1"/>
</dbReference>
<dbReference type="PRINTS" id="PR00987">
    <property type="entry name" value="TRNASYNTHGLU"/>
</dbReference>
<dbReference type="SUPFAM" id="SSF48163">
    <property type="entry name" value="An anticodon-binding domain of class I aminoacyl-tRNA synthetases"/>
    <property type="match status" value="1"/>
</dbReference>
<dbReference type="SUPFAM" id="SSF52374">
    <property type="entry name" value="Nucleotidylyl transferase"/>
    <property type="match status" value="1"/>
</dbReference>
<dbReference type="PROSITE" id="PS00178">
    <property type="entry name" value="AA_TRNA_LIGASE_I"/>
    <property type="match status" value="1"/>
</dbReference>
<feature type="chain" id="PRO_0000237418" description="Glutamate--tRNA ligase 1">
    <location>
        <begin position="1"/>
        <end position="462"/>
    </location>
</feature>
<feature type="short sequence motif" description="'HIGH' region" evidence="1">
    <location>
        <begin position="8"/>
        <end position="18"/>
    </location>
</feature>
<feature type="short sequence motif" description="'KMSKS' region" evidence="1">
    <location>
        <begin position="237"/>
        <end position="241"/>
    </location>
</feature>
<feature type="binding site" evidence="1">
    <location>
        <position position="240"/>
    </location>
    <ligand>
        <name>ATP</name>
        <dbReference type="ChEBI" id="CHEBI:30616"/>
    </ligand>
</feature>
<reference key="1">
    <citation type="journal article" date="2008" name="Appl. Environ. Microbiol.">
        <title>Genome of the epsilonproteobacterial chemolithoautotroph Sulfurimonas denitrificans.</title>
        <authorList>
            <person name="Sievert S.M."/>
            <person name="Scott K.M."/>
            <person name="Klotz M.G."/>
            <person name="Chain P.S.G."/>
            <person name="Hauser L.J."/>
            <person name="Hemp J."/>
            <person name="Huegler M."/>
            <person name="Land M."/>
            <person name="Lapidus A."/>
            <person name="Larimer F.W."/>
            <person name="Lucas S."/>
            <person name="Malfatti S.A."/>
            <person name="Meyer F."/>
            <person name="Paulsen I.T."/>
            <person name="Ren Q."/>
            <person name="Simon J."/>
            <person name="Bailey K."/>
            <person name="Diaz E."/>
            <person name="Fitzpatrick K.A."/>
            <person name="Glover B."/>
            <person name="Gwatney N."/>
            <person name="Korajkic A."/>
            <person name="Long A."/>
            <person name="Mobberley J.M."/>
            <person name="Pantry S.N."/>
            <person name="Pazder G."/>
            <person name="Peterson S."/>
            <person name="Quintanilla J.D."/>
            <person name="Sprinkle R."/>
            <person name="Stephens J."/>
            <person name="Thomas P."/>
            <person name="Vaughn R."/>
            <person name="Weber M.J."/>
            <person name="Wooten L.L."/>
        </authorList>
    </citation>
    <scope>NUCLEOTIDE SEQUENCE [LARGE SCALE GENOMIC DNA]</scope>
    <source>
        <strain>ATCC 33889 / DSM 1251</strain>
    </source>
</reference>
<evidence type="ECO:0000255" key="1">
    <source>
        <dbReference type="HAMAP-Rule" id="MF_00022"/>
    </source>
</evidence>
<organism>
    <name type="scientific">Sulfurimonas denitrificans (strain ATCC 33889 / DSM 1251)</name>
    <name type="common">Thiomicrospira denitrificans (strain ATCC 33889 / DSM 1251)</name>
    <dbReference type="NCBI Taxonomy" id="326298"/>
    <lineage>
        <taxon>Bacteria</taxon>
        <taxon>Pseudomonadati</taxon>
        <taxon>Campylobacterota</taxon>
        <taxon>Epsilonproteobacteria</taxon>
        <taxon>Campylobacterales</taxon>
        <taxon>Sulfurimonadaceae</taxon>
        <taxon>Sulfurimonas</taxon>
    </lineage>
</organism>
<sequence>MIVTRFAPSPTGYLHIGGLRTALFSYLWARKNGGKFLLRIEDTDKARNSQEAAEAIVKAFNWLGLEHDGEITYQSQRDDIYAIYVKQLLDEGKAYRCYMSREELDALRETQMANKERTKYDGKYRDFDGTPPDGVDSVIRIKAPLSGEIIVRDGVKGDVVFKAEDILDDFVIARADGSPTYNFVVAIDDHLMGVTEVIRGDDHLSNTPKQIVIYEALGFDVPKFYHVPMIHNSEGKKLSKRDGATDVMAYKEMGYTPAALLNFLVRLGWSNGDQEIFSMDEMRELFDPKNINRSASIYNTEKLDWLNSHYIKNTPNQELAKMLEEYNLTIASHDKKEILLDALKERAKTLKELALLVTEVINPPASYDEKALEKSLKGEAVEVLNNFIAKLSACKELHLPSEYHHVMQEVVDEMGIGFGKIGQPLRVALLGKMSGPGLDSVMAVIGIDETILRVKSALALVK</sequence>
<name>SYE1_SULDN</name>
<keyword id="KW-0030">Aminoacyl-tRNA synthetase</keyword>
<keyword id="KW-0067">ATP-binding</keyword>
<keyword id="KW-0963">Cytoplasm</keyword>
<keyword id="KW-0436">Ligase</keyword>
<keyword id="KW-0547">Nucleotide-binding</keyword>
<keyword id="KW-0648">Protein biosynthesis</keyword>
<keyword id="KW-1185">Reference proteome</keyword>
<accession>Q30UA5</accession>